<feature type="chain" id="PRO_0000115953" description="Cytoplasmic envelopment protein 2">
    <location>
        <begin position="1"/>
        <end position="370"/>
    </location>
</feature>
<sequence>MMAAASDSCLSLWEGSASSPNRQLTPEAVNCLTEALTEDVAVLRLIRSDPRVKIFMAVSVLTPRLARFAPPPPKLTHTAKCAVIMIYLTRPKALALQPKQFHMLVTFNKASVYSLVVRVKTKPFPVGTQRFRAVFQDPESIGLPSDIPDPAAENIPTEINDRLDVSNFATPAQPPKDKYDCCVLAPGVWWSNANKAIYFLQMDVALLALCPAGWKARGLGIILGRLLNHQEGCATCRFTEHSDPLNATADSVATPESCLCWAPCLWRKAHQRELTVEGDRYLFRVLFMDAVERVRLTGLRRSPKITANLADLVVGIGPHGQQIPVNNAGWKLVALDADISRLIVCGCYALRYICPPTNSKHQPSSPDEYA</sequence>
<dbReference type="EMBL" id="AY464052">
    <property type="protein sequence ID" value="AAS45931.1"/>
    <property type="molecule type" value="Genomic_DNA"/>
</dbReference>
<dbReference type="Proteomes" id="UP000008296">
    <property type="component" value="Segment"/>
</dbReference>
<dbReference type="GO" id="GO:0030430">
    <property type="term" value="C:host cell cytoplasm"/>
    <property type="evidence" value="ECO:0007669"/>
    <property type="project" value="UniProtKB-SubCell"/>
</dbReference>
<dbReference type="GO" id="GO:0042025">
    <property type="term" value="C:host cell nucleus"/>
    <property type="evidence" value="ECO:0007669"/>
    <property type="project" value="UniProtKB-SubCell"/>
</dbReference>
<dbReference type="GO" id="GO:0019033">
    <property type="term" value="C:viral tegument"/>
    <property type="evidence" value="ECO:0007669"/>
    <property type="project" value="UniProtKB-SubCell"/>
</dbReference>
<dbReference type="HAMAP" id="MF_04039">
    <property type="entry name" value="HSV_CEP2"/>
    <property type="match status" value="1"/>
</dbReference>
<dbReference type="InterPro" id="IPR004286">
    <property type="entry name" value="Herpes_UL16/UL94"/>
</dbReference>
<dbReference type="Pfam" id="PF03044">
    <property type="entry name" value="Herpes_UL16"/>
    <property type="match status" value="1"/>
</dbReference>
<keyword id="KW-1035">Host cytoplasm</keyword>
<keyword id="KW-1048">Host nucleus</keyword>
<keyword id="KW-0426">Late protein</keyword>
<keyword id="KW-0946">Virion</keyword>
<keyword id="KW-0920">Virion tegument</keyword>
<organism>
    <name type="scientific">Equine herpesvirus 1 (strain V592)</name>
    <name type="common">EHV-1</name>
    <name type="synonym">Equine abortion virus</name>
    <dbReference type="NCBI Taxonomy" id="310273"/>
    <lineage>
        <taxon>Viruses</taxon>
        <taxon>Duplodnaviria</taxon>
        <taxon>Heunggongvirae</taxon>
        <taxon>Peploviricota</taxon>
        <taxon>Herviviricetes</taxon>
        <taxon>Herpesvirales</taxon>
        <taxon>Orthoherpesviridae</taxon>
        <taxon>Alphaherpesvirinae</taxon>
        <taxon>Varicellovirus</taxon>
        <taxon>Varicellovirus equidalpha1</taxon>
        <taxon>Equid alphaherpesvirus 1</taxon>
    </lineage>
</organism>
<reference evidence="2 3" key="1">
    <citation type="submission" date="2003-11" db="EMBL/GenBank/DDBJ databases">
        <authorList>
            <person name="Davis-Poynter N."/>
            <person name="Nugent J."/>
            <person name="Birch-Machin I."/>
            <person name="Allen G.P."/>
        </authorList>
    </citation>
    <scope>NUCLEOTIDE SEQUENCE [LARGE SCALE GENOMIC DNA]</scope>
</reference>
<comment type="function">
    <text evidence="1">Plays a critical role in cytoplasmic virus egress. Participates in the final step of tegumentation and envelope acquisition within the host cytoplasm by directly interacting with the capsid. Upon virion binding to target cell, a signaling cascade is triggered to disrupt the interaction with the capsid, thereby preparing capsid uncoating.</text>
</comment>
<comment type="subunit">
    <text evidence="1">Interacts with cytoplasmic envelopment protein 3 and with the capsid.</text>
</comment>
<comment type="subcellular location">
    <subcellularLocation>
        <location evidence="1">Virion tegument</location>
    </subcellularLocation>
    <subcellularLocation>
        <location evidence="1">Host cytoplasm</location>
    </subcellularLocation>
    <subcellularLocation>
        <location evidence="1">Host nucleus</location>
    </subcellularLocation>
    <text evidence="1">Localizes in the host nucleus up to 18 hours postinfection, but at later times localizes to punctate, cytoplasmic structures.</text>
</comment>
<comment type="similarity">
    <text evidence="1">Belongs to the herpesviridae cytoplasmic envelopment protein 2 family.</text>
</comment>
<accession>Q6S6S5</accession>
<name>CEP2_EHV1V</name>
<gene>
    <name type="ordered locus">46</name>
</gene>
<proteinExistence type="inferred from homology"/>
<evidence type="ECO:0000255" key="1">
    <source>
        <dbReference type="HAMAP-Rule" id="MF_04039"/>
    </source>
</evidence>
<evidence type="ECO:0000305" key="2"/>
<evidence type="ECO:0000312" key="3">
    <source>
        <dbReference type="EMBL" id="AAS45931.1"/>
    </source>
</evidence>
<protein>
    <recommendedName>
        <fullName evidence="1">Cytoplasmic envelopment protein 2</fullName>
    </recommendedName>
</protein>
<organismHost>
    <name type="scientific">Equus caballus</name>
    <name type="common">Horse</name>
    <dbReference type="NCBI Taxonomy" id="9796"/>
</organismHost>